<organism>
    <name type="scientific">Chromobacterium violaceum (strain ATCC 12472 / DSM 30191 / JCM 1249 / CCUG 213 / NBRC 12614 / NCIMB 9131 / NCTC 9757 / MK)</name>
    <dbReference type="NCBI Taxonomy" id="243365"/>
    <lineage>
        <taxon>Bacteria</taxon>
        <taxon>Pseudomonadati</taxon>
        <taxon>Pseudomonadota</taxon>
        <taxon>Betaproteobacteria</taxon>
        <taxon>Neisseriales</taxon>
        <taxon>Chromobacteriaceae</taxon>
        <taxon>Chromobacterium</taxon>
    </lineage>
</organism>
<keyword id="KW-0067">ATP-binding</keyword>
<keyword id="KW-0547">Nucleotide-binding</keyword>
<keyword id="KW-1185">Reference proteome</keyword>
<keyword id="KW-0808">Transferase</keyword>
<feature type="chain" id="PRO_0000412778" description="Ribose 1,5-bisphosphate phosphokinase PhnN">
    <location>
        <begin position="1"/>
        <end position="185"/>
    </location>
</feature>
<feature type="binding site" evidence="1">
    <location>
        <begin position="13"/>
        <end position="20"/>
    </location>
    <ligand>
        <name>ATP</name>
        <dbReference type="ChEBI" id="CHEBI:30616"/>
    </ligand>
</feature>
<name>PHNN_CHRVO</name>
<evidence type="ECO:0000255" key="1">
    <source>
        <dbReference type="HAMAP-Rule" id="MF_00836"/>
    </source>
</evidence>
<dbReference type="EC" id="2.7.4.23" evidence="1"/>
<dbReference type="EMBL" id="AE016825">
    <property type="protein sequence ID" value="AAQ59523.1"/>
    <property type="molecule type" value="Genomic_DNA"/>
</dbReference>
<dbReference type="RefSeq" id="WP_011135401.1">
    <property type="nucleotide sequence ID" value="NC_005085.1"/>
</dbReference>
<dbReference type="SMR" id="Q7NWY0"/>
<dbReference type="STRING" id="243365.CV_1849"/>
<dbReference type="KEGG" id="cvi:CV_1849"/>
<dbReference type="eggNOG" id="COG3709">
    <property type="taxonomic scope" value="Bacteria"/>
</dbReference>
<dbReference type="HOGENOM" id="CLU_102477_0_0_4"/>
<dbReference type="OrthoDB" id="341217at2"/>
<dbReference type="UniPathway" id="UPA00087">
    <property type="reaction ID" value="UER00175"/>
</dbReference>
<dbReference type="Proteomes" id="UP000001424">
    <property type="component" value="Chromosome"/>
</dbReference>
<dbReference type="GO" id="GO:0005524">
    <property type="term" value="F:ATP binding"/>
    <property type="evidence" value="ECO:0007669"/>
    <property type="project" value="UniProtKB-KW"/>
</dbReference>
<dbReference type="GO" id="GO:0033863">
    <property type="term" value="F:ribose 1,5-bisphosphate phosphokinase activity"/>
    <property type="evidence" value="ECO:0007669"/>
    <property type="project" value="UniProtKB-UniRule"/>
</dbReference>
<dbReference type="GO" id="GO:0006015">
    <property type="term" value="P:5-phosphoribose 1-diphosphate biosynthetic process"/>
    <property type="evidence" value="ECO:0007669"/>
    <property type="project" value="UniProtKB-UniRule"/>
</dbReference>
<dbReference type="GO" id="GO:0019634">
    <property type="term" value="P:organic phosphonate metabolic process"/>
    <property type="evidence" value="ECO:0007669"/>
    <property type="project" value="UniProtKB-UniRule"/>
</dbReference>
<dbReference type="Gene3D" id="3.40.50.300">
    <property type="entry name" value="P-loop containing nucleotide triphosphate hydrolases"/>
    <property type="match status" value="1"/>
</dbReference>
<dbReference type="HAMAP" id="MF_00836">
    <property type="entry name" value="PhnN"/>
    <property type="match status" value="1"/>
</dbReference>
<dbReference type="InterPro" id="IPR008145">
    <property type="entry name" value="GK/Ca_channel_bsu"/>
</dbReference>
<dbReference type="InterPro" id="IPR027417">
    <property type="entry name" value="P-loop_NTPase"/>
</dbReference>
<dbReference type="InterPro" id="IPR012699">
    <property type="entry name" value="PhnN"/>
</dbReference>
<dbReference type="NCBIfam" id="TIGR02322">
    <property type="entry name" value="phosphon_PhnN"/>
    <property type="match status" value="1"/>
</dbReference>
<dbReference type="NCBIfam" id="NF007485">
    <property type="entry name" value="PRK10078.1"/>
    <property type="match status" value="1"/>
</dbReference>
<dbReference type="SMART" id="SM00072">
    <property type="entry name" value="GuKc"/>
    <property type="match status" value="1"/>
</dbReference>
<dbReference type="SUPFAM" id="SSF52540">
    <property type="entry name" value="P-loop containing nucleoside triphosphate hydrolases"/>
    <property type="match status" value="1"/>
</dbReference>
<accession>Q7NWY0</accession>
<proteinExistence type="inferred from homology"/>
<reference key="1">
    <citation type="journal article" date="2003" name="Proc. Natl. Acad. Sci. U.S.A.">
        <title>The complete genome sequence of Chromobacterium violaceum reveals remarkable and exploitable bacterial adaptability.</title>
        <authorList>
            <person name="Vasconcelos A.T.R."/>
            <person name="de Almeida D.F."/>
            <person name="Hungria M."/>
            <person name="Guimaraes C.T."/>
            <person name="Antonio R.V."/>
            <person name="Almeida F.C."/>
            <person name="de Almeida L.G.P."/>
            <person name="de Almeida R."/>
            <person name="Alves-Gomes J.A."/>
            <person name="Andrade E.M."/>
            <person name="Araripe J."/>
            <person name="de Araujo M.F.F."/>
            <person name="Astolfi-Filho S."/>
            <person name="Azevedo V."/>
            <person name="Baptista A.J."/>
            <person name="Bataus L.A.M."/>
            <person name="Batista J.S."/>
            <person name="Belo A."/>
            <person name="van den Berg C."/>
            <person name="Bogo M."/>
            <person name="Bonatto S."/>
            <person name="Bordignon J."/>
            <person name="Brigido M.M."/>
            <person name="Brito C.A."/>
            <person name="Brocchi M."/>
            <person name="Burity H.A."/>
            <person name="Camargo A.A."/>
            <person name="Cardoso D.D.P."/>
            <person name="Carneiro N.P."/>
            <person name="Carraro D.M."/>
            <person name="Carvalho C.M.B."/>
            <person name="Cascardo J.C.M."/>
            <person name="Cavada B.S."/>
            <person name="Chueire L.M.O."/>
            <person name="Creczynski-Pasa T.B."/>
            <person name="Cunha-Junior N.C."/>
            <person name="Fagundes N."/>
            <person name="Falcao C.L."/>
            <person name="Fantinatti F."/>
            <person name="Farias I.P."/>
            <person name="Felipe M.S.S."/>
            <person name="Ferrari L.P."/>
            <person name="Ferro J.A."/>
            <person name="Ferro M.I.T."/>
            <person name="Franco G.R."/>
            <person name="Freitas N.S.A."/>
            <person name="Furlan L.R."/>
            <person name="Gazzinelli R.T."/>
            <person name="Gomes E.A."/>
            <person name="Goncalves P.R."/>
            <person name="Grangeiro T.B."/>
            <person name="Grattapaglia D."/>
            <person name="Grisard E.C."/>
            <person name="Hanna E.S."/>
            <person name="Jardim S.N."/>
            <person name="Laurino J."/>
            <person name="Leoi L.C.T."/>
            <person name="Lima L.F.A."/>
            <person name="Loureiro M.F."/>
            <person name="Lyra M.C.C.P."/>
            <person name="Madeira H.M.F."/>
            <person name="Manfio G.P."/>
            <person name="Maranhao A.Q."/>
            <person name="Martins W.S."/>
            <person name="di Mauro S.M.Z."/>
            <person name="de Medeiros S.R.B."/>
            <person name="Meissner R.V."/>
            <person name="Moreira M.A.M."/>
            <person name="Nascimento F.F."/>
            <person name="Nicolas M.F."/>
            <person name="Oliveira J.G."/>
            <person name="Oliveira S.C."/>
            <person name="Paixao R.F.C."/>
            <person name="Parente J.A."/>
            <person name="Pedrosa F.O."/>
            <person name="Pena S.D.J."/>
            <person name="Pereira J.O."/>
            <person name="Pereira M."/>
            <person name="Pinto L.S.R.C."/>
            <person name="Pinto L.S."/>
            <person name="Porto J.I.R."/>
            <person name="Potrich D.P."/>
            <person name="Ramalho-Neto C.E."/>
            <person name="Reis A.M.M."/>
            <person name="Rigo L.U."/>
            <person name="Rondinelli E."/>
            <person name="Santos E.B.P."/>
            <person name="Santos F.R."/>
            <person name="Schneider M.P.C."/>
            <person name="Seuanez H.N."/>
            <person name="Silva A.M.R."/>
            <person name="da Silva A.L.C."/>
            <person name="Silva D.W."/>
            <person name="Silva R."/>
            <person name="Simoes I.C."/>
            <person name="Simon D."/>
            <person name="Soares C.M.A."/>
            <person name="Soares R.B.A."/>
            <person name="Souza E.M."/>
            <person name="Souza K.R.L."/>
            <person name="Souza R.C."/>
            <person name="Steffens M.B.R."/>
            <person name="Steindel M."/>
            <person name="Teixeira S.R."/>
            <person name="Urmenyi T."/>
            <person name="Vettore A."/>
            <person name="Wassem R."/>
            <person name="Zaha A."/>
            <person name="Simpson A.J.G."/>
        </authorList>
    </citation>
    <scope>NUCLEOTIDE SEQUENCE [LARGE SCALE GENOMIC DNA]</scope>
    <source>
        <strain>ATCC 12472 / DSM 30191 / JCM 1249 / CCUG 213 / NBRC 12614 / NCIMB 9131 / NCTC 9757 / MK</strain>
    </source>
</reference>
<comment type="function">
    <text evidence="1">Catalyzes the phosphorylation of ribose 1,5-bisphosphate to 5-phospho-D-ribosyl alpha-1-diphosphate (PRPP).</text>
</comment>
<comment type="catalytic activity">
    <reaction evidence="1">
        <text>alpha-D-ribose 1,5-bisphosphate + ATP = 5-phospho-alpha-D-ribose 1-diphosphate + ADP</text>
        <dbReference type="Rhea" id="RHEA:20109"/>
        <dbReference type="ChEBI" id="CHEBI:30616"/>
        <dbReference type="ChEBI" id="CHEBI:58017"/>
        <dbReference type="ChEBI" id="CHEBI:68688"/>
        <dbReference type="ChEBI" id="CHEBI:456216"/>
        <dbReference type="EC" id="2.7.4.23"/>
    </reaction>
</comment>
<comment type="pathway">
    <text evidence="1">Metabolic intermediate biosynthesis; 5-phospho-alpha-D-ribose 1-diphosphate biosynthesis; 5-phospho-alpha-D-ribose 1-diphosphate from D-ribose 5-phosphate (route II): step 3/3.</text>
</comment>
<comment type="similarity">
    <text evidence="1">Belongs to the ribose 1,5-bisphosphokinase family.</text>
</comment>
<gene>
    <name evidence="1" type="primary">phnN</name>
    <name type="ordered locus">CV_1849</name>
</gene>
<protein>
    <recommendedName>
        <fullName evidence="1">Ribose 1,5-bisphosphate phosphokinase PhnN</fullName>
        <ecNumber evidence="1">2.7.4.23</ecNumber>
    </recommendedName>
    <alternativeName>
        <fullName evidence="1">Ribose 1,5-bisphosphokinase</fullName>
    </alternativeName>
</protein>
<sequence>MADKTGTLWYVMGPSGAGKDSLLAYARQRLPGGVMFAHRYITRPADAGGENHVALSREEFDAREAGGCFALVWRRHGLAYGLGVETELWLGQGMDVVVNGSRSSLPLAMARFPTLRPLWITASPEVLAVRLRQRARECGEVIERRLAEAASFAPPAGCEVLVNDGALAQAGDTLLRWLRGGRRVC</sequence>